<organism>
    <name type="scientific">Aspergillus japonicus</name>
    <dbReference type="NCBI Taxonomy" id="34381"/>
    <lineage>
        <taxon>Eukaryota</taxon>
        <taxon>Fungi</taxon>
        <taxon>Dikarya</taxon>
        <taxon>Ascomycota</taxon>
        <taxon>Pezizomycotina</taxon>
        <taxon>Eurotiomycetes</taxon>
        <taxon>Eurotiomycetidae</taxon>
        <taxon>Eurotiales</taxon>
        <taxon>Aspergillaceae</taxon>
        <taxon>Aspergillus</taxon>
        <taxon>Aspergillus subgen. Circumdati</taxon>
    </lineage>
</organism>
<evidence type="ECO:0000250" key="1">
    <source>
        <dbReference type="UniProtKB" id="Q9HBL8"/>
    </source>
</evidence>
<evidence type="ECO:0000269" key="2">
    <source>
    </source>
</evidence>
<evidence type="ECO:0000269" key="3">
    <source>
    </source>
</evidence>
<evidence type="ECO:0000303" key="4">
    <source>
    </source>
</evidence>
<evidence type="ECO:0000305" key="5"/>
<evidence type="ECO:0000305" key="6">
    <source>
    </source>
</evidence>
<comment type="function">
    <text evidence="2 3 6">NmrA-like family domain-containing oxidoreductase; part of the him gene cluster that mediates the biosynthesis of himeic acid A, a ubiquitin-activating enzyme (E1) inhibitor (PubMed:29314577). First, himA, together with the trans-enoyl reductase himH, catalyzes the formation of apolyketide chain, which is then condensed with leucine by the NRPS activity of himA. Dieckmann cyclization and release from himA gives a tetramic acid intermediate as the product of himA PKS-NRPS (PubMed:29314577). HimG then catalyzes alpha-oxidation of the tetramic acid ring, with a subsequent rearrangement to yield apyrone intermediate (Probable). Two terminal methyl groups of polyketide and amide side chains are oxidized to carboxylic acids by himC cytochrome P450 monooxygenase to form himeic acid A (Probable). Himeic acid A is further converted to himeic acid B and C during culture growth. No gene responsible for pyrone to pyridone conversion was found in the him gene cluster and himeic acid A is non-enzymatically converted to himeic acid C by the incorporation of an ammonium nitrogen atom in a pH5 buffer, and to himeic acid B at a conversion ratio of 50% during incubation in MeOH for 5 days (PubMed:29486950).</text>
</comment>
<comment type="pathway">
    <text evidence="6">Secondary metabolite biosynthesis.</text>
</comment>
<comment type="similarity">
    <text evidence="5">Belongs to the NmrA-type oxidoreductase family.</text>
</comment>
<sequence length="331" mass="35903">MQIITIFGATGNQGSSVARSLLRNRSFEVRCITRNAESKKAQLLKAQGAVIVEADGYDTSQIQQAFSGSWGAFVNTNGDDPSLASENRTDRDLGLSIIRGAAAAGVKHLVYSSGPWAAKLSGGACSVPSNDAKAEVQHVAQGLGFETVTPIMPGWFFETFLEPQMAAIFGGFPVTPDEEGWLTCRAPLWGGREHVPFLSVDNDFGDIVHGVFLNPVRWNLRPIQAISDFLSFADFVNTYVSLTGKKARFVALSSPMEMETMGHPLLESIRGFFIFSQLRDGEYFGTGPTEKETATALKQAAHRAQANDRKGEQAALTSARDFLQARFGNSK</sequence>
<name>HIMF_ASPJA</name>
<feature type="chain" id="PRO_0000445954" description="NmrA-like family domain-containing oxidoreductase himF">
    <location>
        <begin position="1"/>
        <end position="331"/>
    </location>
</feature>
<feature type="binding site" evidence="1">
    <location>
        <begin position="8"/>
        <end position="13"/>
    </location>
    <ligand>
        <name>NADP(+)</name>
        <dbReference type="ChEBI" id="CHEBI:58349"/>
    </ligand>
</feature>
<feature type="binding site" evidence="1">
    <location>
        <begin position="34"/>
        <end position="38"/>
    </location>
    <ligand>
        <name>NADP(+)</name>
        <dbReference type="ChEBI" id="CHEBI:58349"/>
    </ligand>
</feature>
<feature type="binding site" evidence="1">
    <location>
        <begin position="55"/>
        <end position="56"/>
    </location>
    <ligand>
        <name>NADP(+)</name>
        <dbReference type="ChEBI" id="CHEBI:58349"/>
    </ligand>
</feature>
<feature type="binding site" evidence="1">
    <location>
        <begin position="76"/>
        <end position="78"/>
    </location>
    <ligand>
        <name>NADP(+)</name>
        <dbReference type="ChEBI" id="CHEBI:58349"/>
    </ligand>
</feature>
<feature type="binding site" evidence="1">
    <location>
        <position position="133"/>
    </location>
    <ligand>
        <name>NADP(+)</name>
        <dbReference type="ChEBI" id="CHEBI:58349"/>
    </ligand>
</feature>
<feature type="binding site" evidence="1">
    <location>
        <begin position="155"/>
        <end position="167"/>
    </location>
    <ligand>
        <name>NADP(+)</name>
        <dbReference type="ChEBI" id="CHEBI:58349"/>
    </ligand>
</feature>
<keyword id="KW-0521">NADP</keyword>
<keyword id="KW-0560">Oxidoreductase</keyword>
<accession>A0A2Z5TWF0</accession>
<dbReference type="EC" id="1.-.-.-" evidence="6"/>
<dbReference type="EMBL" id="LC331673">
    <property type="protein sequence ID" value="BBA91554.1"/>
    <property type="molecule type" value="Genomic_DNA"/>
</dbReference>
<dbReference type="SMR" id="A0A2Z5TWF0"/>
<dbReference type="GO" id="GO:0005634">
    <property type="term" value="C:nucleus"/>
    <property type="evidence" value="ECO:0007669"/>
    <property type="project" value="TreeGrafter"/>
</dbReference>
<dbReference type="GO" id="GO:0016491">
    <property type="term" value="F:oxidoreductase activity"/>
    <property type="evidence" value="ECO:0007669"/>
    <property type="project" value="UniProtKB-KW"/>
</dbReference>
<dbReference type="Gene3D" id="3.40.50.720">
    <property type="entry name" value="NAD(P)-binding Rossmann-like Domain"/>
    <property type="match status" value="1"/>
</dbReference>
<dbReference type="Gene3D" id="3.90.25.10">
    <property type="entry name" value="UDP-galactose 4-epimerase, domain 1"/>
    <property type="match status" value="1"/>
</dbReference>
<dbReference type="InterPro" id="IPR036291">
    <property type="entry name" value="NAD(P)-bd_dom_sf"/>
</dbReference>
<dbReference type="InterPro" id="IPR008030">
    <property type="entry name" value="NmrA-like"/>
</dbReference>
<dbReference type="InterPro" id="IPR051164">
    <property type="entry name" value="NmrA-like_oxidored"/>
</dbReference>
<dbReference type="PANTHER" id="PTHR42748">
    <property type="entry name" value="NITROGEN METABOLITE REPRESSION PROTEIN NMRA FAMILY MEMBER"/>
    <property type="match status" value="1"/>
</dbReference>
<dbReference type="PANTHER" id="PTHR42748:SF30">
    <property type="entry name" value="NMRA-LIKE DOMAIN-CONTAINING PROTEIN"/>
    <property type="match status" value="1"/>
</dbReference>
<dbReference type="Pfam" id="PF05368">
    <property type="entry name" value="NmrA"/>
    <property type="match status" value="1"/>
</dbReference>
<dbReference type="SUPFAM" id="SSF51735">
    <property type="entry name" value="NAD(P)-binding Rossmann-fold domains"/>
    <property type="match status" value="1"/>
</dbReference>
<reference key="1">
    <citation type="journal article" date="2018" name="ChemBioChem">
        <title>Identification of the biosynthetic gene cluster for himeic acid A: a ubiquitin-activating enzyme (E1) inhibitor in Aspergillus japonicus MF275.</title>
        <authorList>
            <person name="Hashimoto M."/>
            <person name="Kato H."/>
            <person name="Katsuki A."/>
            <person name="Tsukamoto S."/>
            <person name="Fujii I."/>
        </authorList>
    </citation>
    <scope>NUCLEOTIDE SEQUENCE [GENOMIC DNA]</scope>
    <scope>FUNCTION</scope>
    <scope>PATHWAY</scope>
    <source>
        <strain>MF275</strain>
    </source>
</reference>
<reference key="2">
    <citation type="journal article" date="2018" name="Bioorg. Med. Chem.">
        <title>pH-dependent production of himeic acid A and its non-enzymatic conversions to himeic acids B and C.</title>
        <authorList>
            <person name="Katsuki A."/>
            <person name="Kato H."/>
            <person name="Tahara Y."/>
            <person name="Hashimoto M."/>
            <person name="Fujii I."/>
            <person name="Tsukamoto S."/>
        </authorList>
    </citation>
    <scope>FUNCTION</scope>
</reference>
<protein>
    <recommendedName>
        <fullName evidence="4">NmrA-like family domain-containing oxidoreductase himF</fullName>
        <ecNumber evidence="6">1.-.-.-</ecNumber>
    </recommendedName>
    <alternativeName>
        <fullName evidence="4">Himeic acid A biosynthesis cluster protein F</fullName>
    </alternativeName>
</protein>
<proteinExistence type="inferred from homology"/>
<gene>
    <name evidence="4" type="primary">himF</name>
</gene>